<proteinExistence type="evidence at protein level"/>
<organismHost>
    <name type="scientific">Staphylococcus aureus</name>
    <dbReference type="NCBI Taxonomy" id="1280"/>
</organismHost>
<name>CAPSD_BPPSP</name>
<accession>G9M973</accession>
<accession>P86943</accession>
<evidence type="ECO:0000269" key="1">
    <source>
    </source>
</evidence>
<evidence type="ECO:0000303" key="2">
    <source>
    </source>
</evidence>
<evidence type="ECO:0000305" key="3"/>
<evidence type="ECO:0000305" key="4">
    <source>
    </source>
</evidence>
<evidence type="ECO:0000312" key="5">
    <source>
        <dbReference type="Proteomes" id="UP000007857"/>
    </source>
</evidence>
<organism evidence="5">
    <name type="scientific">Staphylococcus phage S13'</name>
    <dbReference type="NCBI Taxonomy" id="1010615"/>
    <lineage>
        <taxon>Viruses</taxon>
        <taxon>Duplodnaviria</taxon>
        <taxon>Heunggongvirae</taxon>
        <taxon>Uroviricota</taxon>
        <taxon>Caudoviricetes</taxon>
        <taxon>Rountreeviridae</taxon>
        <taxon>Rakietenvirinae</taxon>
        <taxon>Rosenblumvirus</taxon>
        <taxon>Rosenblumvirus S241</taxon>
    </lineage>
</organism>
<protein>
    <recommendedName>
        <fullName evidence="2">Major capsid protein</fullName>
    </recommendedName>
    <alternativeName>
        <fullName evidence="3">Major head protein</fullName>
    </alternativeName>
</protein>
<keyword id="KW-0167">Capsid protein</keyword>
<keyword id="KW-0903">Direct protein sequencing</keyword>
<keyword id="KW-0946">Virion</keyword>
<reference evidence="5" key="1">
    <citation type="journal article" date="2014" name="MicrobiologyOpen">
        <title>In silico analysis of AHJD-like viruses, Staphylococcus aureus phages S24-1 and S13', and study of phage S24-1 adsorption.</title>
        <authorList>
            <person name="Uchiyama J."/>
            <person name="Takemura-Uchiyama I."/>
            <person name="Kato S."/>
            <person name="Sato M."/>
            <person name="Ujihara T."/>
            <person name="Matsui H."/>
            <person name="Hanaki H."/>
            <person name="Daibata M."/>
            <person name="Matsuzaki S."/>
        </authorList>
    </citation>
    <scope>NUCLEOTIDE SEQUENCE [LARGE SCALE GENOMIC DNA]</scope>
</reference>
<reference evidence="3" key="2">
    <citation type="journal article" date="2013" name="FEMS Microbiol. Lett.">
        <title>Evaluating efficacy of bacteriophage therapy against Staphylococcus aureus infections using a silkworm larval infection model.</title>
        <authorList>
            <person name="Takemura-Uchiyama I."/>
            <person name="Uchiyama J."/>
            <person name="Kato S."/>
            <person name="Inoue T."/>
            <person name="Ujihara T."/>
            <person name="Ohara N."/>
            <person name="Daibata M."/>
            <person name="Matsuzaki S."/>
        </authorList>
    </citation>
    <scope>PROTEIN SEQUENCE OF 2-21</scope>
    <scope>SUBCELLULAR LOCATION</scope>
</reference>
<feature type="initiator methionine" description="Removed" evidence="4">
    <location>
        <position position="1"/>
    </location>
</feature>
<feature type="chain" id="PRO_0000439202" description="Major capsid protein" evidence="4">
    <location>
        <begin position="2"/>
        <end position="403"/>
    </location>
</feature>
<dbReference type="EMBL" id="AB626963">
    <property type="protein sequence ID" value="BAL42327.1"/>
    <property type="molecule type" value="Genomic_DNA"/>
</dbReference>
<dbReference type="SMR" id="G9M973"/>
<dbReference type="Proteomes" id="UP000007857">
    <property type="component" value="Genome"/>
</dbReference>
<dbReference type="GO" id="GO:0019028">
    <property type="term" value="C:viral capsid"/>
    <property type="evidence" value="ECO:0007669"/>
    <property type="project" value="UniProtKB-KW"/>
</dbReference>
<sequence>MAEKSTKNETALLVAQSAKSALQDFNHTYSKSWTFGDKWDNSNTMFETFVNKFLFPKINETLLIDIALGNRFNWLAKEQDFIGQYSEEYVIMDTVPINMDLSKNEELMLKRNYPRMATKLYGSGIVKKQKFTLNNNDTRFNFQTLADATNYALGVYKKKISDINVLEEKEMRAMLVDYSLNQLSESNVRKATSKQDLASKVFEAILNLQNNSAKYNEVHRASGGAIGQYTTVSKLKDIVILTTDSLKSYLLDTKIANTFQVAGIDFTDHVISFDDLGGVFKVTKDIVVSSDESVAFLRAYGDYQTHKGDTIPVGSVFTYDVSNLSEFKSNVEEIKPKSDLYAFILDINSIKYKRYTKGMLKQPFYNGEFDEVTHWIHYYSFKAISPFFNKILITDQDVTPRTE</sequence>
<comment type="function">
    <text evidence="4">Assembles to form an icosahedral capsid.</text>
</comment>
<comment type="subcellular location">
    <subcellularLocation>
        <location evidence="1">Virion</location>
    </subcellularLocation>
</comment>
<gene>
    <name evidence="2" type="ORF">ORF19</name>
</gene>